<keyword id="KW-0240">DNA-directed RNA polymerase</keyword>
<keyword id="KW-0548">Nucleotidyltransferase</keyword>
<keyword id="KW-1185">Reference proteome</keyword>
<keyword id="KW-0804">Transcription</keyword>
<keyword id="KW-0808">Transferase</keyword>
<organism>
    <name type="scientific">Lactococcus lactis subsp. lactis (strain IL1403)</name>
    <name type="common">Streptococcus lactis</name>
    <dbReference type="NCBI Taxonomy" id="272623"/>
    <lineage>
        <taxon>Bacteria</taxon>
        <taxon>Bacillati</taxon>
        <taxon>Bacillota</taxon>
        <taxon>Bacilli</taxon>
        <taxon>Lactobacillales</taxon>
        <taxon>Streptococcaceae</taxon>
        <taxon>Lactococcus</taxon>
    </lineage>
</organism>
<comment type="function">
    <text evidence="1">Promotes RNA polymerase assembly. Latches the N- and C-terminal regions of the beta' subunit thereby facilitating its interaction with the beta and alpha subunits (By similarity).</text>
</comment>
<comment type="catalytic activity">
    <reaction>
        <text>RNA(n) + a ribonucleoside 5'-triphosphate = RNA(n+1) + diphosphate</text>
        <dbReference type="Rhea" id="RHEA:21248"/>
        <dbReference type="Rhea" id="RHEA-COMP:14527"/>
        <dbReference type="Rhea" id="RHEA-COMP:17342"/>
        <dbReference type="ChEBI" id="CHEBI:33019"/>
        <dbReference type="ChEBI" id="CHEBI:61557"/>
        <dbReference type="ChEBI" id="CHEBI:140395"/>
        <dbReference type="EC" id="2.7.7.6"/>
    </reaction>
</comment>
<comment type="subunit">
    <text evidence="1">The RNAP catalytic core consists of 2 alpha, 1 beta, 1 beta' and 1 omega subunit. When a sigma factor is associated with the core the holoenzyme is formed, which can initiate transcription (By similarity).</text>
</comment>
<comment type="similarity">
    <text evidence="3">Belongs to the RNA polymerase subunit omega family.</text>
</comment>
<sequence length="117" mass="13434">MMLEPSIDKLLDQVDSKYSLVVLEAKRAHELRDKERPTKEFKAVKNTLRALEEIADGTVKIHPSPELKRETLVEKRELERLQAKMKEQLIKEQIAKEEAEEEAKQKNSRAAKAAAAE</sequence>
<reference key="1">
    <citation type="journal article" date="2001" name="Genome Res.">
        <title>The complete genome sequence of the lactic acid bacterium Lactococcus lactis ssp. lactis IL1403.</title>
        <authorList>
            <person name="Bolotin A."/>
            <person name="Wincker P."/>
            <person name="Mauger S."/>
            <person name="Jaillon O."/>
            <person name="Malarme K."/>
            <person name="Weissenbach J."/>
            <person name="Ehrlich S.D."/>
            <person name="Sorokin A."/>
        </authorList>
    </citation>
    <scope>NUCLEOTIDE SEQUENCE [LARGE SCALE GENOMIC DNA]</scope>
    <source>
        <strain>IL1403</strain>
    </source>
</reference>
<evidence type="ECO:0000250" key="1"/>
<evidence type="ECO:0000256" key="2">
    <source>
        <dbReference type="SAM" id="MobiDB-lite"/>
    </source>
</evidence>
<evidence type="ECO:0000305" key="3"/>
<dbReference type="EC" id="2.7.7.6"/>
<dbReference type="EMBL" id="AE005176">
    <property type="protein sequence ID" value="AAK05996.1"/>
    <property type="molecule type" value="Genomic_DNA"/>
</dbReference>
<dbReference type="PIR" id="B86862">
    <property type="entry name" value="B86862"/>
</dbReference>
<dbReference type="RefSeq" id="NP_268055.1">
    <property type="nucleotide sequence ID" value="NC_002662.1"/>
</dbReference>
<dbReference type="RefSeq" id="WP_010906189.1">
    <property type="nucleotide sequence ID" value="NC_002662.1"/>
</dbReference>
<dbReference type="SMR" id="Q9CEE4"/>
<dbReference type="PaxDb" id="272623-L149295"/>
<dbReference type="EnsemblBacteria" id="AAK05996">
    <property type="protein sequence ID" value="AAK05996"/>
    <property type="gene ID" value="L149295"/>
</dbReference>
<dbReference type="GeneID" id="89634255"/>
<dbReference type="KEGG" id="lla:L149295"/>
<dbReference type="PATRIC" id="fig|272623.7.peg.2033"/>
<dbReference type="eggNOG" id="COG1758">
    <property type="taxonomic scope" value="Bacteria"/>
</dbReference>
<dbReference type="HOGENOM" id="CLU_125406_0_0_9"/>
<dbReference type="OrthoDB" id="9815459at2"/>
<dbReference type="Proteomes" id="UP000002196">
    <property type="component" value="Chromosome"/>
</dbReference>
<dbReference type="GO" id="GO:0000428">
    <property type="term" value="C:DNA-directed RNA polymerase complex"/>
    <property type="evidence" value="ECO:0007669"/>
    <property type="project" value="UniProtKB-KW"/>
</dbReference>
<dbReference type="GO" id="GO:0003677">
    <property type="term" value="F:DNA binding"/>
    <property type="evidence" value="ECO:0007669"/>
    <property type="project" value="UniProtKB-UniRule"/>
</dbReference>
<dbReference type="GO" id="GO:0003899">
    <property type="term" value="F:DNA-directed RNA polymerase activity"/>
    <property type="evidence" value="ECO:0007669"/>
    <property type="project" value="UniProtKB-UniRule"/>
</dbReference>
<dbReference type="GO" id="GO:0006351">
    <property type="term" value="P:DNA-templated transcription"/>
    <property type="evidence" value="ECO:0007669"/>
    <property type="project" value="UniProtKB-UniRule"/>
</dbReference>
<dbReference type="Gene3D" id="3.90.940.10">
    <property type="match status" value="1"/>
</dbReference>
<dbReference type="HAMAP" id="MF_00366">
    <property type="entry name" value="RNApol_bact_RpoZ"/>
    <property type="match status" value="1"/>
</dbReference>
<dbReference type="InterPro" id="IPR003716">
    <property type="entry name" value="DNA-dir_RNA_pol_omega"/>
</dbReference>
<dbReference type="InterPro" id="IPR006110">
    <property type="entry name" value="Pol_omega/Rpo6/RPB6"/>
</dbReference>
<dbReference type="InterPro" id="IPR036161">
    <property type="entry name" value="RPB6/omega-like_sf"/>
</dbReference>
<dbReference type="NCBIfam" id="TIGR00690">
    <property type="entry name" value="rpoZ"/>
    <property type="match status" value="1"/>
</dbReference>
<dbReference type="PANTHER" id="PTHR34476">
    <property type="entry name" value="DNA-DIRECTED RNA POLYMERASE SUBUNIT OMEGA"/>
    <property type="match status" value="1"/>
</dbReference>
<dbReference type="PANTHER" id="PTHR34476:SF1">
    <property type="entry name" value="DNA-DIRECTED RNA POLYMERASE SUBUNIT OMEGA"/>
    <property type="match status" value="1"/>
</dbReference>
<dbReference type="Pfam" id="PF01192">
    <property type="entry name" value="RNA_pol_Rpb6"/>
    <property type="match status" value="1"/>
</dbReference>
<dbReference type="SMART" id="SM01409">
    <property type="entry name" value="RNA_pol_Rpb6"/>
    <property type="match status" value="1"/>
</dbReference>
<dbReference type="SUPFAM" id="SSF63562">
    <property type="entry name" value="RPB6/omega subunit-like"/>
    <property type="match status" value="1"/>
</dbReference>
<accession>Q9CEE4</accession>
<feature type="chain" id="PRO_0000128945" description="DNA-directed RNA polymerase subunit omega">
    <location>
        <begin position="1"/>
        <end position="117"/>
    </location>
</feature>
<feature type="region of interest" description="Disordered" evidence="2">
    <location>
        <begin position="96"/>
        <end position="117"/>
    </location>
</feature>
<feature type="compositionally biased region" description="Basic and acidic residues" evidence="2">
    <location>
        <begin position="96"/>
        <end position="105"/>
    </location>
</feature>
<feature type="compositionally biased region" description="Low complexity" evidence="2">
    <location>
        <begin position="108"/>
        <end position="117"/>
    </location>
</feature>
<proteinExistence type="inferred from homology"/>
<protein>
    <recommendedName>
        <fullName>DNA-directed RNA polymerase subunit omega</fullName>
        <shortName>RNAP omega subunit</shortName>
        <ecNumber>2.7.7.6</ecNumber>
    </recommendedName>
    <alternativeName>
        <fullName>RNA polymerase omega subunit</fullName>
    </alternativeName>
    <alternativeName>
        <fullName>Transcriptase subunit omega</fullName>
    </alternativeName>
</protein>
<gene>
    <name type="primary">rpoZ</name>
    <name type="ordered locus">LL1898</name>
    <name type="ORF">L149295</name>
</gene>
<name>RPOZ_LACLA</name>